<gene>
    <name evidence="1" type="primary">groES</name>
    <name evidence="1" type="synonym">groS</name>
    <name type="ordered locus">ECS88_4728</name>
</gene>
<organism>
    <name type="scientific">Escherichia coli O45:K1 (strain S88 / ExPEC)</name>
    <dbReference type="NCBI Taxonomy" id="585035"/>
    <lineage>
        <taxon>Bacteria</taxon>
        <taxon>Pseudomonadati</taxon>
        <taxon>Pseudomonadota</taxon>
        <taxon>Gammaproteobacteria</taxon>
        <taxon>Enterobacterales</taxon>
        <taxon>Enterobacteriaceae</taxon>
        <taxon>Escherichia</taxon>
    </lineage>
</organism>
<reference key="1">
    <citation type="journal article" date="2009" name="PLoS Genet.">
        <title>Organised genome dynamics in the Escherichia coli species results in highly diverse adaptive paths.</title>
        <authorList>
            <person name="Touchon M."/>
            <person name="Hoede C."/>
            <person name="Tenaillon O."/>
            <person name="Barbe V."/>
            <person name="Baeriswyl S."/>
            <person name="Bidet P."/>
            <person name="Bingen E."/>
            <person name="Bonacorsi S."/>
            <person name="Bouchier C."/>
            <person name="Bouvet O."/>
            <person name="Calteau A."/>
            <person name="Chiapello H."/>
            <person name="Clermont O."/>
            <person name="Cruveiller S."/>
            <person name="Danchin A."/>
            <person name="Diard M."/>
            <person name="Dossat C."/>
            <person name="Karoui M.E."/>
            <person name="Frapy E."/>
            <person name="Garry L."/>
            <person name="Ghigo J.M."/>
            <person name="Gilles A.M."/>
            <person name="Johnson J."/>
            <person name="Le Bouguenec C."/>
            <person name="Lescat M."/>
            <person name="Mangenot S."/>
            <person name="Martinez-Jehanne V."/>
            <person name="Matic I."/>
            <person name="Nassif X."/>
            <person name="Oztas S."/>
            <person name="Petit M.A."/>
            <person name="Pichon C."/>
            <person name="Rouy Z."/>
            <person name="Ruf C.S."/>
            <person name="Schneider D."/>
            <person name="Tourret J."/>
            <person name="Vacherie B."/>
            <person name="Vallenet D."/>
            <person name="Medigue C."/>
            <person name="Rocha E.P.C."/>
            <person name="Denamur E."/>
        </authorList>
    </citation>
    <scope>NUCLEOTIDE SEQUENCE [LARGE SCALE GENOMIC DNA]</scope>
    <source>
        <strain>S88 / ExPEC</strain>
    </source>
</reference>
<proteinExistence type="inferred from homology"/>
<name>CH10_ECO45</name>
<protein>
    <recommendedName>
        <fullName evidence="1">Co-chaperonin GroES</fullName>
    </recommendedName>
    <alternativeName>
        <fullName evidence="1">10 kDa chaperonin</fullName>
    </alternativeName>
    <alternativeName>
        <fullName evidence="1">Chaperonin-10</fullName>
        <shortName evidence="1">Cpn10</shortName>
    </alternativeName>
</protein>
<comment type="function">
    <text evidence="1">Together with the chaperonin GroEL, plays an essential role in assisting protein folding. The GroEL-GroES system forms a nano-cage that allows encapsulation of the non-native substrate proteins and provides a physical environment optimized to promote and accelerate protein folding. GroES binds to the apical surface of the GroEL ring, thereby capping the opening of the GroEL channel.</text>
</comment>
<comment type="subunit">
    <text evidence="1">Heptamer of 7 subunits arranged in a ring. Interacts with the chaperonin GroEL.</text>
</comment>
<comment type="subcellular location">
    <subcellularLocation>
        <location evidence="1">Cytoplasm</location>
    </subcellularLocation>
</comment>
<comment type="similarity">
    <text evidence="1">Belongs to the GroES chaperonin family.</text>
</comment>
<dbReference type="EMBL" id="CU928161">
    <property type="protein sequence ID" value="CAR05878.1"/>
    <property type="molecule type" value="Genomic_DNA"/>
</dbReference>
<dbReference type="RefSeq" id="WP_001026276.1">
    <property type="nucleotide sequence ID" value="NC_011742.1"/>
</dbReference>
<dbReference type="SMR" id="B7MKU7"/>
<dbReference type="KEGG" id="ecz:ECS88_4728"/>
<dbReference type="HOGENOM" id="CLU_132825_1_1_6"/>
<dbReference type="Proteomes" id="UP000000747">
    <property type="component" value="Chromosome"/>
</dbReference>
<dbReference type="GO" id="GO:0005737">
    <property type="term" value="C:cytoplasm"/>
    <property type="evidence" value="ECO:0007669"/>
    <property type="project" value="UniProtKB-SubCell"/>
</dbReference>
<dbReference type="GO" id="GO:0005524">
    <property type="term" value="F:ATP binding"/>
    <property type="evidence" value="ECO:0007669"/>
    <property type="project" value="InterPro"/>
</dbReference>
<dbReference type="GO" id="GO:0046872">
    <property type="term" value="F:metal ion binding"/>
    <property type="evidence" value="ECO:0007669"/>
    <property type="project" value="TreeGrafter"/>
</dbReference>
<dbReference type="GO" id="GO:0044183">
    <property type="term" value="F:protein folding chaperone"/>
    <property type="evidence" value="ECO:0007669"/>
    <property type="project" value="InterPro"/>
</dbReference>
<dbReference type="GO" id="GO:0051087">
    <property type="term" value="F:protein-folding chaperone binding"/>
    <property type="evidence" value="ECO:0007669"/>
    <property type="project" value="TreeGrafter"/>
</dbReference>
<dbReference type="GO" id="GO:0051082">
    <property type="term" value="F:unfolded protein binding"/>
    <property type="evidence" value="ECO:0007669"/>
    <property type="project" value="TreeGrafter"/>
</dbReference>
<dbReference type="GO" id="GO:0051085">
    <property type="term" value="P:chaperone cofactor-dependent protein refolding"/>
    <property type="evidence" value="ECO:0007669"/>
    <property type="project" value="TreeGrafter"/>
</dbReference>
<dbReference type="CDD" id="cd00320">
    <property type="entry name" value="cpn10"/>
    <property type="match status" value="1"/>
</dbReference>
<dbReference type="FunFam" id="2.30.33.40:FF:000001">
    <property type="entry name" value="10 kDa chaperonin"/>
    <property type="match status" value="1"/>
</dbReference>
<dbReference type="Gene3D" id="2.30.33.40">
    <property type="entry name" value="GroES chaperonin"/>
    <property type="match status" value="1"/>
</dbReference>
<dbReference type="HAMAP" id="MF_00580">
    <property type="entry name" value="CH10"/>
    <property type="match status" value="1"/>
</dbReference>
<dbReference type="InterPro" id="IPR020818">
    <property type="entry name" value="Chaperonin_GroES"/>
</dbReference>
<dbReference type="InterPro" id="IPR037124">
    <property type="entry name" value="Chaperonin_GroES_sf"/>
</dbReference>
<dbReference type="InterPro" id="IPR018369">
    <property type="entry name" value="Chaprnonin_Cpn10_CS"/>
</dbReference>
<dbReference type="InterPro" id="IPR011032">
    <property type="entry name" value="GroES-like_sf"/>
</dbReference>
<dbReference type="NCBIfam" id="NF001526">
    <property type="entry name" value="PRK00364.1-1"/>
    <property type="match status" value="1"/>
</dbReference>
<dbReference type="NCBIfam" id="NF001527">
    <property type="entry name" value="PRK00364.1-2"/>
    <property type="match status" value="1"/>
</dbReference>
<dbReference type="NCBIfam" id="NF001531">
    <property type="entry name" value="PRK00364.2-2"/>
    <property type="match status" value="1"/>
</dbReference>
<dbReference type="PANTHER" id="PTHR10772">
    <property type="entry name" value="10 KDA HEAT SHOCK PROTEIN"/>
    <property type="match status" value="1"/>
</dbReference>
<dbReference type="PANTHER" id="PTHR10772:SF58">
    <property type="entry name" value="CO-CHAPERONIN GROES"/>
    <property type="match status" value="1"/>
</dbReference>
<dbReference type="Pfam" id="PF00166">
    <property type="entry name" value="Cpn10"/>
    <property type="match status" value="1"/>
</dbReference>
<dbReference type="PRINTS" id="PR00297">
    <property type="entry name" value="CHAPERONIN10"/>
</dbReference>
<dbReference type="SMART" id="SM00883">
    <property type="entry name" value="Cpn10"/>
    <property type="match status" value="1"/>
</dbReference>
<dbReference type="SUPFAM" id="SSF50129">
    <property type="entry name" value="GroES-like"/>
    <property type="match status" value="1"/>
</dbReference>
<dbReference type="PROSITE" id="PS00681">
    <property type="entry name" value="CHAPERONINS_CPN10"/>
    <property type="match status" value="1"/>
</dbReference>
<evidence type="ECO:0000255" key="1">
    <source>
        <dbReference type="HAMAP-Rule" id="MF_00580"/>
    </source>
</evidence>
<accession>B7MKU7</accession>
<keyword id="KW-0143">Chaperone</keyword>
<keyword id="KW-0963">Cytoplasm</keyword>
<keyword id="KW-1185">Reference proteome</keyword>
<feature type="chain" id="PRO_1000129651" description="Co-chaperonin GroES">
    <location>
        <begin position="1"/>
        <end position="97"/>
    </location>
</feature>
<sequence length="97" mass="10387">MNIRPLHDRVIVKRKEVETKSAGGIVLTGSAAAKSTRGEVLAVGNGRILENGEVKPLDVKVGDIVIFNDGYGVKSEKIDNEEVLIMSESDILAIVEA</sequence>